<organism>
    <name type="scientific">Xylella fastidiosa (strain M12)</name>
    <dbReference type="NCBI Taxonomy" id="405440"/>
    <lineage>
        <taxon>Bacteria</taxon>
        <taxon>Pseudomonadati</taxon>
        <taxon>Pseudomonadota</taxon>
        <taxon>Gammaproteobacteria</taxon>
        <taxon>Lysobacterales</taxon>
        <taxon>Lysobacteraceae</taxon>
        <taxon>Xylella</taxon>
    </lineage>
</organism>
<protein>
    <recommendedName>
        <fullName evidence="1">S-adenosylmethionine decarboxylase proenzyme</fullName>
        <shortName evidence="1">AdoMetDC</shortName>
        <shortName evidence="1">SAMDC</shortName>
        <ecNumber evidence="1">4.1.1.50</ecNumber>
    </recommendedName>
    <component>
        <recommendedName>
            <fullName evidence="1">S-adenosylmethionine decarboxylase beta chain</fullName>
        </recommendedName>
    </component>
    <component>
        <recommendedName>
            <fullName evidence="1">S-adenosylmethionine decarboxylase alpha chain</fullName>
        </recommendedName>
    </component>
</protein>
<keyword id="KW-0068">Autocatalytic cleavage</keyword>
<keyword id="KW-0210">Decarboxylase</keyword>
<keyword id="KW-0456">Lyase</keyword>
<keyword id="KW-0620">Polyamine biosynthesis</keyword>
<keyword id="KW-0670">Pyruvate</keyword>
<keyword id="KW-0949">S-adenosyl-L-methionine</keyword>
<keyword id="KW-0704">Schiff base</keyword>
<keyword id="KW-0745">Spermidine biosynthesis</keyword>
<keyword id="KW-0865">Zymogen</keyword>
<sequence length="264" mass="30704">MVKPLPRLRLQGFNNLTKALSFNIYDVCYARTEEERQRYIDYIDERYDADRLTQILTDVAEIIGANILNIARQDYDPQGASVTILISEEPVIDKKQAGKELISDAVVAHMDKSHITVHTYPETHPQEGIATFRADIDVATCGVISPLKALNYLIESLESDIVIMDYRVRGFTRDVKGKKHFIDHKINSIQNFLSKSIKSRYEMFDVNVYQENIFHTKMHLKDFDLDQYLFEEKARNLSFKERMKIEALLKLEIEELFHGRNLAE</sequence>
<name>SPED_XYLFM</name>
<reference key="1">
    <citation type="journal article" date="2010" name="J. Bacteriol.">
        <title>Whole genome sequences of two Xylella fastidiosa strains (M12 and M23) causing almond leaf scorch disease in California.</title>
        <authorList>
            <person name="Chen J."/>
            <person name="Xie G."/>
            <person name="Han S."/>
            <person name="Chertkov O."/>
            <person name="Sims D."/>
            <person name="Civerolo E.L."/>
        </authorList>
    </citation>
    <scope>NUCLEOTIDE SEQUENCE [LARGE SCALE GENOMIC DNA]</scope>
    <source>
        <strain>M12</strain>
    </source>
</reference>
<comment type="function">
    <text evidence="1">Catalyzes the decarboxylation of S-adenosylmethionine to S-adenosylmethioninamine (dcAdoMet), the propylamine donor required for the synthesis of the polyamines spermine and spermidine from the diamine putrescine.</text>
</comment>
<comment type="catalytic activity">
    <reaction evidence="1">
        <text>S-adenosyl-L-methionine + H(+) = S-adenosyl 3-(methylsulfanyl)propylamine + CO2</text>
        <dbReference type="Rhea" id="RHEA:15981"/>
        <dbReference type="ChEBI" id="CHEBI:15378"/>
        <dbReference type="ChEBI" id="CHEBI:16526"/>
        <dbReference type="ChEBI" id="CHEBI:57443"/>
        <dbReference type="ChEBI" id="CHEBI:59789"/>
        <dbReference type="EC" id="4.1.1.50"/>
    </reaction>
</comment>
<comment type="cofactor">
    <cofactor evidence="1">
        <name>pyruvate</name>
        <dbReference type="ChEBI" id="CHEBI:15361"/>
    </cofactor>
    <text evidence="1">Binds 1 pyruvoyl group covalently per subunit.</text>
</comment>
<comment type="pathway">
    <text evidence="1">Amine and polyamine biosynthesis; S-adenosylmethioninamine biosynthesis; S-adenosylmethioninamine from S-adenosyl-L-methionine: step 1/1.</text>
</comment>
<comment type="subunit">
    <text evidence="1">Heterooctamer of four alpha and four beta chains arranged as a tetramer of alpha/beta heterodimers.</text>
</comment>
<comment type="PTM">
    <text evidence="1">Is synthesized initially as an inactive proenzyme. Formation of the active enzyme involves a self-maturation process in which the active site pyruvoyl group is generated from an internal serine residue via an autocatalytic post-translational modification. Two non-identical subunits are generated from the proenzyme in this reaction, and the pyruvate is formed at the N-terminus of the alpha chain, which is derived from the carboxyl end of the proenzyme. The post-translation cleavage follows an unusual pathway, termed non-hydrolytic serinolysis, in which the side chain hydroxyl group of the serine supplies its oxygen atom to form the C-terminus of the beta chain, while the remainder of the serine residue undergoes an oxidative deamination to produce ammonia and the pyruvoyl group blocking the N-terminus of the alpha chain.</text>
</comment>
<comment type="similarity">
    <text evidence="1">Belongs to the prokaryotic AdoMetDC family. Type 2 subfamily.</text>
</comment>
<evidence type="ECO:0000255" key="1">
    <source>
        <dbReference type="HAMAP-Rule" id="MF_00465"/>
    </source>
</evidence>
<dbReference type="EC" id="4.1.1.50" evidence="1"/>
<dbReference type="EMBL" id="CP000941">
    <property type="protein sequence ID" value="ACA11864.1"/>
    <property type="molecule type" value="Genomic_DNA"/>
</dbReference>
<dbReference type="RefSeq" id="WP_004083667.1">
    <property type="nucleotide sequence ID" value="NC_010513.1"/>
</dbReference>
<dbReference type="KEGG" id="xfm:Xfasm12_0878"/>
<dbReference type="HOGENOM" id="CLU_092007_0_0_6"/>
<dbReference type="UniPathway" id="UPA00331">
    <property type="reaction ID" value="UER00451"/>
</dbReference>
<dbReference type="GO" id="GO:0005829">
    <property type="term" value="C:cytosol"/>
    <property type="evidence" value="ECO:0007669"/>
    <property type="project" value="TreeGrafter"/>
</dbReference>
<dbReference type="GO" id="GO:0004014">
    <property type="term" value="F:adenosylmethionine decarboxylase activity"/>
    <property type="evidence" value="ECO:0007669"/>
    <property type="project" value="UniProtKB-UniRule"/>
</dbReference>
<dbReference type="GO" id="GO:0008295">
    <property type="term" value="P:spermidine biosynthetic process"/>
    <property type="evidence" value="ECO:0007669"/>
    <property type="project" value="UniProtKB-UniRule"/>
</dbReference>
<dbReference type="FunFam" id="3.60.90.10:FF:000001">
    <property type="entry name" value="S-adenosylmethionine decarboxylase proenzyme"/>
    <property type="match status" value="1"/>
</dbReference>
<dbReference type="Gene3D" id="3.60.90.10">
    <property type="entry name" value="S-adenosylmethionine decarboxylase"/>
    <property type="match status" value="1"/>
</dbReference>
<dbReference type="HAMAP" id="MF_00465">
    <property type="entry name" value="AdoMetDC_2"/>
    <property type="match status" value="1"/>
</dbReference>
<dbReference type="InterPro" id="IPR003826">
    <property type="entry name" value="AdoMetDC_fam_prok"/>
</dbReference>
<dbReference type="InterPro" id="IPR009165">
    <property type="entry name" value="S-AdoMet_deCO2ase_bac"/>
</dbReference>
<dbReference type="InterPro" id="IPR016067">
    <property type="entry name" value="S-AdoMet_deCO2ase_core"/>
</dbReference>
<dbReference type="NCBIfam" id="TIGR03331">
    <property type="entry name" value="SAM_DCase_Eco"/>
    <property type="match status" value="1"/>
</dbReference>
<dbReference type="PANTHER" id="PTHR33866">
    <property type="entry name" value="S-ADENOSYLMETHIONINE DECARBOXYLASE PROENZYME"/>
    <property type="match status" value="1"/>
</dbReference>
<dbReference type="PANTHER" id="PTHR33866:SF1">
    <property type="entry name" value="S-ADENOSYLMETHIONINE DECARBOXYLASE PROENZYME"/>
    <property type="match status" value="1"/>
</dbReference>
<dbReference type="Pfam" id="PF02675">
    <property type="entry name" value="AdoMet_dc"/>
    <property type="match status" value="1"/>
</dbReference>
<dbReference type="PIRSF" id="PIRSF001356">
    <property type="entry name" value="SAM_decarboxylas"/>
    <property type="match status" value="1"/>
</dbReference>
<dbReference type="SUPFAM" id="SSF56276">
    <property type="entry name" value="S-adenosylmethionine decarboxylase"/>
    <property type="match status" value="1"/>
</dbReference>
<accession>B0U6Z8</accession>
<gene>
    <name evidence="1" type="primary">speD</name>
    <name type="ordered locus">Xfasm12_0878</name>
</gene>
<feature type="chain" id="PRO_0000364423" description="S-adenosylmethionine decarboxylase beta chain" evidence="1">
    <location>
        <begin position="1"/>
        <end position="112"/>
    </location>
</feature>
<feature type="chain" id="PRO_0000364424" description="S-adenosylmethionine decarboxylase alpha chain" evidence="1">
    <location>
        <begin position="113"/>
        <end position="264"/>
    </location>
</feature>
<feature type="active site" description="Schiff-base intermediate with substrate; via pyruvic acid" evidence="1">
    <location>
        <position position="113"/>
    </location>
</feature>
<feature type="active site" description="Proton acceptor; for processing activity" evidence="1">
    <location>
        <position position="118"/>
    </location>
</feature>
<feature type="active site" description="Proton donor; for catalytic activity" evidence="1">
    <location>
        <position position="141"/>
    </location>
</feature>
<feature type="site" description="Cleavage (non-hydrolytic); by autolysis" evidence="1">
    <location>
        <begin position="112"/>
        <end position="113"/>
    </location>
</feature>
<feature type="modified residue" description="Pyruvic acid (Ser); by autocatalysis" evidence="1">
    <location>
        <position position="113"/>
    </location>
</feature>
<proteinExistence type="inferred from homology"/>